<dbReference type="EC" id="2.3.2.27" evidence="5 6"/>
<dbReference type="EC" id="2.3.2.-" evidence="7"/>
<dbReference type="EMBL" id="AL590388">
    <property type="status" value="NOT_ANNOTATED_CDS"/>
    <property type="molecule type" value="Genomic_DNA"/>
</dbReference>
<dbReference type="EMBL" id="BC150836">
    <property type="protein sequence ID" value="AAI50837.1"/>
    <property type="molecule type" value="mRNA"/>
</dbReference>
<dbReference type="CCDS" id="CCDS26370.1"/>
<dbReference type="RefSeq" id="NP_001025106.1">
    <property type="nucleotide sequence ID" value="NM_001029935.2"/>
</dbReference>
<dbReference type="RefSeq" id="XP_006516700.1">
    <property type="nucleotide sequence ID" value="XM_006516637.3"/>
</dbReference>
<dbReference type="RefSeq" id="XP_011242605.1">
    <property type="nucleotide sequence ID" value="XM_011244303.2"/>
</dbReference>
<dbReference type="SMR" id="Q5SZ99"/>
<dbReference type="FunCoup" id="Q5SZ99">
    <property type="interactions" value="178"/>
</dbReference>
<dbReference type="STRING" id="10090.ENSMUSP00000153240"/>
<dbReference type="GlyGen" id="Q5SZ99">
    <property type="glycosylation" value="1 site"/>
</dbReference>
<dbReference type="iPTMnet" id="Q5SZ99"/>
<dbReference type="PhosphoSitePlus" id="Q5SZ99"/>
<dbReference type="PaxDb" id="10090-ENSMUSP00000073709"/>
<dbReference type="ProteomicsDB" id="339470"/>
<dbReference type="Antibodypedia" id="10788">
    <property type="antibodies" value="506 antibodies from 30 providers"/>
</dbReference>
<dbReference type="DNASU" id="214158"/>
<dbReference type="Ensembl" id="ENSMUST00000074067.4">
    <property type="protein sequence ID" value="ENSMUSP00000073709.3"/>
    <property type="gene ID" value="ENSMUSG00000064140.4"/>
</dbReference>
<dbReference type="Ensembl" id="ENSMUST00000226039.2">
    <property type="protein sequence ID" value="ENSMUSP00000153240.2"/>
    <property type="gene ID" value="ENSMUSG00000064140.4"/>
</dbReference>
<dbReference type="GeneID" id="214158"/>
<dbReference type="KEGG" id="mmu:214158"/>
<dbReference type="UCSC" id="uc007pva.2">
    <property type="organism name" value="mouse"/>
</dbReference>
<dbReference type="AGR" id="MGI:2684869"/>
<dbReference type="CTD" id="10475"/>
<dbReference type="MGI" id="MGI:2684869">
    <property type="gene designation" value="Trim38"/>
</dbReference>
<dbReference type="VEuPathDB" id="HostDB:ENSMUSG00000064140"/>
<dbReference type="eggNOG" id="KOG2177">
    <property type="taxonomic scope" value="Eukaryota"/>
</dbReference>
<dbReference type="GeneTree" id="ENSGT00940000160468"/>
<dbReference type="HOGENOM" id="CLU_013137_0_3_1"/>
<dbReference type="InParanoid" id="Q5SZ99"/>
<dbReference type="OMA" id="FRVYQHS"/>
<dbReference type="OrthoDB" id="6270329at2759"/>
<dbReference type="PhylomeDB" id="Q5SZ99"/>
<dbReference type="TreeFam" id="TF342569"/>
<dbReference type="UniPathway" id="UPA00143"/>
<dbReference type="UniPathway" id="UPA00886"/>
<dbReference type="BioGRID-ORCS" id="214158">
    <property type="hits" value="4 hits in 77 CRISPR screens"/>
</dbReference>
<dbReference type="PRO" id="PR:Q5SZ99"/>
<dbReference type="Proteomes" id="UP000000589">
    <property type="component" value="Chromosome 13"/>
</dbReference>
<dbReference type="RNAct" id="Q5SZ99">
    <property type="molecule type" value="protein"/>
</dbReference>
<dbReference type="Bgee" id="ENSMUSG00000064140">
    <property type="expression patterns" value="Expressed in blastoderm cell in morula and 17 other cell types or tissues"/>
</dbReference>
<dbReference type="ExpressionAtlas" id="Q5SZ99">
    <property type="expression patterns" value="baseline and differential"/>
</dbReference>
<dbReference type="GO" id="GO:0005737">
    <property type="term" value="C:cytoplasm"/>
    <property type="evidence" value="ECO:0007669"/>
    <property type="project" value="UniProtKB-SubCell"/>
</dbReference>
<dbReference type="GO" id="GO:0003713">
    <property type="term" value="F:transcription coactivator activity"/>
    <property type="evidence" value="ECO:0007669"/>
    <property type="project" value="Ensembl"/>
</dbReference>
<dbReference type="GO" id="GO:0061630">
    <property type="term" value="F:ubiquitin protein ligase activity"/>
    <property type="evidence" value="ECO:0000314"/>
    <property type="project" value="UniProtKB"/>
</dbReference>
<dbReference type="GO" id="GO:0008270">
    <property type="term" value="F:zinc ion binding"/>
    <property type="evidence" value="ECO:0007669"/>
    <property type="project" value="UniProtKB-KW"/>
</dbReference>
<dbReference type="GO" id="GO:0045087">
    <property type="term" value="P:innate immune response"/>
    <property type="evidence" value="ECO:0007669"/>
    <property type="project" value="UniProtKB-KW"/>
</dbReference>
<dbReference type="GO" id="GO:0050687">
    <property type="term" value="P:negative regulation of defense response to virus"/>
    <property type="evidence" value="ECO:0000315"/>
    <property type="project" value="MGI"/>
</dbReference>
<dbReference type="GO" id="GO:0043123">
    <property type="term" value="P:positive regulation of canonical NF-kappaB signal transduction"/>
    <property type="evidence" value="ECO:0007669"/>
    <property type="project" value="Ensembl"/>
</dbReference>
<dbReference type="GO" id="GO:0046598">
    <property type="term" value="P:positive regulation of viral entry into host cell"/>
    <property type="evidence" value="ECO:0007669"/>
    <property type="project" value="Ensembl"/>
</dbReference>
<dbReference type="GO" id="GO:0045070">
    <property type="term" value="P:positive regulation of viral genome replication"/>
    <property type="evidence" value="ECO:0000314"/>
    <property type="project" value="MGI"/>
</dbReference>
<dbReference type="GO" id="GO:0043161">
    <property type="term" value="P:proteasome-mediated ubiquitin-dependent protein catabolic process"/>
    <property type="evidence" value="ECO:0000314"/>
    <property type="project" value="MGI"/>
</dbReference>
<dbReference type="GO" id="GO:0070936">
    <property type="term" value="P:protein K48-linked ubiquitination"/>
    <property type="evidence" value="ECO:0000314"/>
    <property type="project" value="MGI"/>
</dbReference>
<dbReference type="GO" id="GO:0016925">
    <property type="term" value="P:protein sumoylation"/>
    <property type="evidence" value="ECO:0007669"/>
    <property type="project" value="UniProtKB-UniPathway"/>
</dbReference>
<dbReference type="GO" id="GO:0032648">
    <property type="term" value="P:regulation of interferon-beta production"/>
    <property type="evidence" value="ECO:0000314"/>
    <property type="project" value="MGI"/>
</dbReference>
<dbReference type="CDD" id="cd15815">
    <property type="entry name" value="SPRY_PRY_TRIM38"/>
    <property type="match status" value="1"/>
</dbReference>
<dbReference type="FunFam" id="2.60.120.920:FF:000072">
    <property type="entry name" value="Tripartite motif containing 38"/>
    <property type="match status" value="1"/>
</dbReference>
<dbReference type="Gene3D" id="2.60.120.920">
    <property type="match status" value="1"/>
</dbReference>
<dbReference type="Gene3D" id="3.30.160.60">
    <property type="entry name" value="Classic Zinc Finger"/>
    <property type="match status" value="1"/>
</dbReference>
<dbReference type="Gene3D" id="3.30.40.10">
    <property type="entry name" value="Zinc/RING finger domain, C3HC4 (zinc finger)"/>
    <property type="match status" value="1"/>
</dbReference>
<dbReference type="InterPro" id="IPR001870">
    <property type="entry name" value="B30.2/SPRY"/>
</dbReference>
<dbReference type="InterPro" id="IPR043136">
    <property type="entry name" value="B30.2/SPRY_sf"/>
</dbReference>
<dbReference type="InterPro" id="IPR003879">
    <property type="entry name" value="Butyrophylin_SPRY"/>
</dbReference>
<dbReference type="InterPro" id="IPR013320">
    <property type="entry name" value="ConA-like_dom_sf"/>
</dbReference>
<dbReference type="InterPro" id="IPR006574">
    <property type="entry name" value="PRY"/>
</dbReference>
<dbReference type="InterPro" id="IPR035790">
    <property type="entry name" value="SPRY/PRY_TRIM38"/>
</dbReference>
<dbReference type="InterPro" id="IPR003877">
    <property type="entry name" value="SPRY_dom"/>
</dbReference>
<dbReference type="InterPro" id="IPR050143">
    <property type="entry name" value="TRIM/RBCC"/>
</dbReference>
<dbReference type="InterPro" id="IPR000315">
    <property type="entry name" value="Znf_B-box"/>
</dbReference>
<dbReference type="InterPro" id="IPR001841">
    <property type="entry name" value="Znf_RING"/>
</dbReference>
<dbReference type="InterPro" id="IPR013083">
    <property type="entry name" value="Znf_RING/FYVE/PHD"/>
</dbReference>
<dbReference type="InterPro" id="IPR017907">
    <property type="entry name" value="Znf_RING_CS"/>
</dbReference>
<dbReference type="PANTHER" id="PTHR24103">
    <property type="entry name" value="E3 UBIQUITIN-PROTEIN LIGASE TRIM"/>
    <property type="match status" value="1"/>
</dbReference>
<dbReference type="Pfam" id="PF13765">
    <property type="entry name" value="PRY"/>
    <property type="match status" value="1"/>
</dbReference>
<dbReference type="Pfam" id="PF00622">
    <property type="entry name" value="SPRY"/>
    <property type="match status" value="1"/>
</dbReference>
<dbReference type="Pfam" id="PF00643">
    <property type="entry name" value="zf-B_box"/>
    <property type="match status" value="1"/>
</dbReference>
<dbReference type="Pfam" id="PF15227">
    <property type="entry name" value="zf-C3HC4_4"/>
    <property type="match status" value="1"/>
</dbReference>
<dbReference type="PRINTS" id="PR01407">
    <property type="entry name" value="BUTYPHLNCDUF"/>
</dbReference>
<dbReference type="SMART" id="SM00336">
    <property type="entry name" value="BBOX"/>
    <property type="match status" value="1"/>
</dbReference>
<dbReference type="SMART" id="SM00589">
    <property type="entry name" value="PRY"/>
    <property type="match status" value="1"/>
</dbReference>
<dbReference type="SMART" id="SM00184">
    <property type="entry name" value="RING"/>
    <property type="match status" value="1"/>
</dbReference>
<dbReference type="SMART" id="SM00449">
    <property type="entry name" value="SPRY"/>
    <property type="match status" value="1"/>
</dbReference>
<dbReference type="SUPFAM" id="SSF57845">
    <property type="entry name" value="B-box zinc-binding domain"/>
    <property type="match status" value="1"/>
</dbReference>
<dbReference type="SUPFAM" id="SSF49899">
    <property type="entry name" value="Concanavalin A-like lectins/glucanases"/>
    <property type="match status" value="1"/>
</dbReference>
<dbReference type="SUPFAM" id="SSF57850">
    <property type="entry name" value="RING/U-box"/>
    <property type="match status" value="1"/>
</dbReference>
<dbReference type="PROSITE" id="PS50188">
    <property type="entry name" value="B302_SPRY"/>
    <property type="match status" value="1"/>
</dbReference>
<dbReference type="PROSITE" id="PS50119">
    <property type="entry name" value="ZF_BBOX"/>
    <property type="match status" value="1"/>
</dbReference>
<dbReference type="PROSITE" id="PS00518">
    <property type="entry name" value="ZF_RING_1"/>
    <property type="match status" value="1"/>
</dbReference>
<dbReference type="PROSITE" id="PS50089">
    <property type="entry name" value="ZF_RING_2"/>
    <property type="match status" value="1"/>
</dbReference>
<gene>
    <name evidence="8 10" type="primary">Trim38</name>
</gene>
<name>TRI38_MOUSE</name>
<proteinExistence type="evidence at protein level"/>
<accession>Q5SZ99</accession>
<accession>B9EKD3</accession>
<protein>
    <recommendedName>
        <fullName evidence="9">E3 ubiquitin-protein ligase TRIM38</fullName>
        <ecNumber evidence="5 6">2.3.2.27</ecNumber>
    </recommendedName>
    <alternativeName>
        <fullName evidence="9">E3 SUMO-protein ligase TRIM38</fullName>
        <ecNumber evidence="7">2.3.2.-</ecNumber>
    </alternativeName>
    <alternativeName>
        <fullName evidence="9">Tripartite motif-containing protein 38</fullName>
    </alternativeName>
</protein>
<keyword id="KW-0963">Cytoplasm</keyword>
<keyword id="KW-0391">Immunity</keyword>
<keyword id="KW-0399">Innate immunity</keyword>
<keyword id="KW-0479">Metal-binding</keyword>
<keyword id="KW-1185">Reference proteome</keyword>
<keyword id="KW-0808">Transferase</keyword>
<keyword id="KW-0833">Ubl conjugation pathway</keyword>
<keyword id="KW-0862">Zinc</keyword>
<keyword id="KW-0863">Zinc-finger</keyword>
<comment type="function">
    <text evidence="1 5 6 7">E3 ubiquitin-protein and E3 SUMO-protein ligase that acts as a regulator of innate immunity (PubMed:22539786, PubMed:26392463, PubMed:27637147). Acts as a negative regulator of type I interferon IFN-beta production by catalyzing 'Lys-48'-linked polyubiquitination of AZI2/NAP1, leading to its degradation (PubMed:22539786). Mediates 'Lys-48'-linked polyubiquitination and proteasomal degradation of the critical TLR adapter TICAM1, inhibiting TLR3-mediated type I interferon signaling (PubMed:26392463). Acts as a positive regulator of the cGAS-STING pathway by acting as a E3 SUMO-protein ligase: mediates sumoylation of CGAS and STING, preventing their degradation and thereby activating the innate immune response to DNA virus (PubMed:27637147). Also acts as a negative regulator of NF-kappa-B signaling independently of its E3 protein ligase activity by promoting lysosome-dependent degradation of TAB2 and TAB3 adapters (By similarity).</text>
</comment>
<comment type="catalytic activity">
    <reaction evidence="5 6">
        <text>S-ubiquitinyl-[E2 ubiquitin-conjugating enzyme]-L-cysteine + [acceptor protein]-L-lysine = [E2 ubiquitin-conjugating enzyme]-L-cysteine + N(6)-ubiquitinyl-[acceptor protein]-L-lysine.</text>
        <dbReference type="EC" id="2.3.2.27"/>
    </reaction>
</comment>
<comment type="pathway">
    <text evidence="5 6">Protein modification; protein ubiquitination.</text>
</comment>
<comment type="pathway">
    <text evidence="7">Protein modification; protein sumoylation.</text>
</comment>
<comment type="subunit">
    <text evidence="5">Interacts (via B30.2/SPRY domain) with TAB2 and TAB3.</text>
</comment>
<comment type="subcellular location">
    <subcellularLocation>
        <location evidence="5">Cytoplasm</location>
    </subcellularLocation>
</comment>
<comment type="disruption phenotype">
    <text evidence="6">Mice are more susceptible to death triggered by polyinosinic:polycytidylic acid, LPS and S.typhimurium (PubMed:26392463). Increased TLR3/4-mediated cytokine induction (PubMed:26392463).</text>
</comment>
<sequence length="471" mass="54430">MGSDFSTVKIRKVTSCSICKAMMSHPVSINCGHSYCKSCIQSYYCNVSPKTGWKMLGCPLCSSPFSLENLRPNKELETIIDMIKGMEEQDQDMVCEEHEEKFNRFCEDDGQLLCWRCYWEDRHKGHTLAHVKDVYQNYKEKLQNTMTKLRELQENHEVQIHFITHQINAWKDAVEDRRQTIKSNFKNLQSFLQEEEKFYLWRLENEEKEMLVQLEGSEANLQQTFERAQCQIQELEAKCQGSAQKLLQDVKNTLSRCEAMKRNPLKADPLKVHTKCNVSELYFDVKTILRRHQVSVILDPSTAHLDLALTKGGRLVTYKRCPRDLQARSSAKRFYGLPCVLGCEGFTSGRYYFEVSVENATSWDLGVCVENVHRGFNMKKEPESGFWTIKMSEEDGLEALTSTPTPPLHLIEKPQILGVFLDYEAGAVSFYSVTTGSHIFTFPKASFQDTLRPFFQVYQYSPLFLPAINNQ</sequence>
<evidence type="ECO:0000250" key="1">
    <source>
        <dbReference type="UniProtKB" id="O00635"/>
    </source>
</evidence>
<evidence type="ECO:0000255" key="2">
    <source>
        <dbReference type="PROSITE-ProRule" id="PRU00024"/>
    </source>
</evidence>
<evidence type="ECO:0000255" key="3">
    <source>
        <dbReference type="PROSITE-ProRule" id="PRU00175"/>
    </source>
</evidence>
<evidence type="ECO:0000255" key="4">
    <source>
        <dbReference type="PROSITE-ProRule" id="PRU00548"/>
    </source>
</evidence>
<evidence type="ECO:0000269" key="5">
    <source>
    </source>
</evidence>
<evidence type="ECO:0000269" key="6">
    <source>
    </source>
</evidence>
<evidence type="ECO:0000269" key="7">
    <source>
    </source>
</evidence>
<evidence type="ECO:0000303" key="8">
    <source>
    </source>
</evidence>
<evidence type="ECO:0000305" key="9"/>
<evidence type="ECO:0000312" key="10">
    <source>
        <dbReference type="MGI" id="MGI:2684869"/>
    </source>
</evidence>
<feature type="chain" id="PRO_0000454476" description="E3 ubiquitin-protein ligase TRIM38">
    <location>
        <begin position="1"/>
        <end position="471"/>
    </location>
</feature>
<feature type="domain" description="B30.2/SPRY" evidence="4">
    <location>
        <begin position="276"/>
        <end position="471"/>
    </location>
</feature>
<feature type="zinc finger region" description="RING-type" evidence="3">
    <location>
        <begin position="16"/>
        <end position="62"/>
    </location>
</feature>
<feature type="zinc finger region" description="B box-type" evidence="2">
    <location>
        <begin position="90"/>
        <end position="131"/>
    </location>
</feature>
<feature type="binding site" evidence="2">
    <location>
        <position position="95"/>
    </location>
    <ligand>
        <name>Zn(2+)</name>
        <dbReference type="ChEBI" id="CHEBI:29105"/>
    </ligand>
</feature>
<feature type="binding site" evidence="2">
    <location>
        <position position="98"/>
    </location>
    <ligand>
        <name>Zn(2+)</name>
        <dbReference type="ChEBI" id="CHEBI:29105"/>
    </ligand>
</feature>
<feature type="binding site" evidence="2">
    <location>
        <position position="117"/>
    </location>
    <ligand>
        <name>Zn(2+)</name>
        <dbReference type="ChEBI" id="CHEBI:29105"/>
    </ligand>
</feature>
<feature type="binding site" evidence="2">
    <location>
        <position position="123"/>
    </location>
    <ligand>
        <name>Zn(2+)</name>
        <dbReference type="ChEBI" id="CHEBI:29105"/>
    </ligand>
</feature>
<feature type="mutagenesis site" description="Abolished E3 ubiquitin-protein activity and ability to inhibit type I interferon IFN-beta production." evidence="5">
    <original>C</original>
    <variation>A</variation>
    <location>
        <position position="16"/>
    </location>
</feature>
<feature type="mutagenesis site" description="Abolished E3 ubiquitin-protein activity and ability to ubiquitinate TICAM1. Abolished E3 SUMO-protein activity and ability to sumoylate CGAS." evidence="6 7">
    <original>C</original>
    <variation>S</variation>
    <location>
        <position position="31"/>
    </location>
</feature>
<feature type="sequence conflict" description="In Ref. 2; AAI50837." evidence="9" ref="2">
    <original>T</original>
    <variation>M</variation>
    <location>
        <position position="7"/>
    </location>
</feature>
<organism>
    <name type="scientific">Mus musculus</name>
    <name type="common">Mouse</name>
    <dbReference type="NCBI Taxonomy" id="10090"/>
    <lineage>
        <taxon>Eukaryota</taxon>
        <taxon>Metazoa</taxon>
        <taxon>Chordata</taxon>
        <taxon>Craniata</taxon>
        <taxon>Vertebrata</taxon>
        <taxon>Euteleostomi</taxon>
        <taxon>Mammalia</taxon>
        <taxon>Eutheria</taxon>
        <taxon>Euarchontoglires</taxon>
        <taxon>Glires</taxon>
        <taxon>Rodentia</taxon>
        <taxon>Myomorpha</taxon>
        <taxon>Muroidea</taxon>
        <taxon>Muridae</taxon>
        <taxon>Murinae</taxon>
        <taxon>Mus</taxon>
        <taxon>Mus</taxon>
    </lineage>
</organism>
<reference key="1">
    <citation type="journal article" date="2009" name="PLoS Biol.">
        <title>Lineage-specific biology revealed by a finished genome assembly of the mouse.</title>
        <authorList>
            <person name="Church D.M."/>
            <person name="Goodstadt L."/>
            <person name="Hillier L.W."/>
            <person name="Zody M.C."/>
            <person name="Goldstein S."/>
            <person name="She X."/>
            <person name="Bult C.J."/>
            <person name="Agarwala R."/>
            <person name="Cherry J.L."/>
            <person name="DiCuccio M."/>
            <person name="Hlavina W."/>
            <person name="Kapustin Y."/>
            <person name="Meric P."/>
            <person name="Maglott D."/>
            <person name="Birtle Z."/>
            <person name="Marques A.C."/>
            <person name="Graves T."/>
            <person name="Zhou S."/>
            <person name="Teague B."/>
            <person name="Potamousis K."/>
            <person name="Churas C."/>
            <person name="Place M."/>
            <person name="Herschleb J."/>
            <person name="Runnheim R."/>
            <person name="Forrest D."/>
            <person name="Amos-Landgraf J."/>
            <person name="Schwartz D.C."/>
            <person name="Cheng Z."/>
            <person name="Lindblad-Toh K."/>
            <person name="Eichler E.E."/>
            <person name="Ponting C.P."/>
        </authorList>
    </citation>
    <scope>NUCLEOTIDE SEQUENCE [LARGE SCALE GENOMIC DNA]</scope>
    <source>
        <strain>C57BL/6J</strain>
    </source>
</reference>
<reference key="2">
    <citation type="journal article" date="2004" name="Genome Res.">
        <title>The status, quality, and expansion of the NIH full-length cDNA project: the Mammalian Gene Collection (MGC).</title>
        <authorList>
            <consortium name="The MGC Project Team"/>
        </authorList>
    </citation>
    <scope>NUCLEOTIDE SEQUENCE [LARGE SCALE MRNA]</scope>
    <source>
        <tissue>Brain</tissue>
    </source>
</reference>
<reference key="3">
    <citation type="journal article" date="2012" name="J. Immunol.">
        <title>Tripartite motif-containing protein 38 negatively regulates TLR3/4- and RIG-I-mediated IFN-beta production and antiviral response by targeting NAP1.</title>
        <authorList>
            <person name="Zhao W."/>
            <person name="Wang L."/>
            <person name="Zhang M."/>
            <person name="Wang P."/>
            <person name="Yuan C."/>
            <person name="Qi J."/>
            <person name="Meng H."/>
            <person name="Gao C."/>
        </authorList>
    </citation>
    <scope>FUNCTION</scope>
    <scope>CATALYTIC ACTIVITY</scope>
    <scope>PATHWAY</scope>
    <scope>SUBCELLULAR LOCATION</scope>
    <scope>INTERACTION WITH TAB2 AND TAB3</scope>
    <scope>MUTAGENESIS OF CYS-16</scope>
</reference>
<reference key="4">
    <citation type="journal article" date="2015" name="J. Immunol.">
        <title>TRIM38 negatively regulates TLR3/4-mediated innate immune and inflammatory responses by two sequential and distinct mechanisms.</title>
        <authorList>
            <person name="Hu M.M."/>
            <person name="Xie X.Q."/>
            <person name="Yang Q."/>
            <person name="Liao C.Y."/>
            <person name="Ye W."/>
            <person name="Lin H."/>
            <person name="Shu H.B."/>
        </authorList>
    </citation>
    <scope>FUNCTION</scope>
    <scope>CATALYTIC ACTIVITY</scope>
    <scope>PATHWAY</scope>
    <scope>DISRUPTION PHENOTYPE</scope>
    <scope>MUTAGENESIS OF CYS-31</scope>
</reference>
<reference key="5">
    <citation type="journal article" date="2016" name="Immunity">
        <title>Sumoylation promotes the stability of the DNA sensor cGAS and the adaptor STING to regulate the kinetics of response to DNA virus.</title>
        <authorList>
            <person name="Hu M.M."/>
            <person name="Yang Q."/>
            <person name="Xie X.Q."/>
            <person name="Liao C.Y."/>
            <person name="Lin H."/>
            <person name="Liu T.T."/>
            <person name="Yin L."/>
            <person name="Shu H.B."/>
        </authorList>
    </citation>
    <scope>FUNCTION</scope>
    <scope>CATALYTIC ACTIVITY</scope>
    <scope>PATHWAY</scope>
    <scope>MUTAGENESIS OF CYS-31</scope>
</reference>